<protein>
    <recommendedName>
        <fullName>Ig heavy chain V region 108A</fullName>
    </recommendedName>
</protein>
<gene>
    <name type="primary">Igh-VJ558</name>
</gene>
<keyword id="KW-1064">Adaptive immunity</keyword>
<keyword id="KW-0391">Immunity</keyword>
<keyword id="KW-1280">Immunoglobulin</keyword>
<keyword id="KW-1185">Reference proteome</keyword>
<keyword id="KW-0732">Signal</keyword>
<accession>P01758</accession>
<proteinExistence type="predicted"/>
<name>HVM14_MOUSE</name>
<feature type="signal peptide">
    <location>
        <begin position="1"/>
        <end position="19"/>
    </location>
</feature>
<feature type="chain" id="PRO_0000015224" description="Ig heavy chain V region 108A">
    <location>
        <begin position="20"/>
        <end position="117"/>
    </location>
</feature>
<feature type="domain" description="Ig-like">
    <location>
        <begin position="20"/>
        <end position="117" status="greater than"/>
    </location>
</feature>
<feature type="non-terminal residue">
    <location>
        <position position="117"/>
    </location>
</feature>
<reference key="1">
    <citation type="journal article" date="1981" name="Nature">
        <title>Diversity of germ-line immunoglobulin VH genes.</title>
        <authorList>
            <person name="Givol D."/>
            <person name="Zakut R."/>
            <person name="Effron K."/>
            <person name="Rechavi G."/>
            <person name="Ram D."/>
            <person name="Cohen J.B."/>
        </authorList>
    </citation>
    <scope>NUCLEOTIDE SEQUENCE [GENOMIC DNA]</scope>
</reference>
<organism>
    <name type="scientific">Mus musculus</name>
    <name type="common">Mouse</name>
    <dbReference type="NCBI Taxonomy" id="10090"/>
    <lineage>
        <taxon>Eukaryota</taxon>
        <taxon>Metazoa</taxon>
        <taxon>Chordata</taxon>
        <taxon>Craniata</taxon>
        <taxon>Vertebrata</taxon>
        <taxon>Euteleostomi</taxon>
        <taxon>Mammalia</taxon>
        <taxon>Eutheria</taxon>
        <taxon>Euarchontoglires</taxon>
        <taxon>Glires</taxon>
        <taxon>Rodentia</taxon>
        <taxon>Myomorpha</taxon>
        <taxon>Muroidea</taxon>
        <taxon>Muridae</taxon>
        <taxon>Murinae</taxon>
        <taxon>Mus</taxon>
        <taxon>Mus</taxon>
    </lineage>
</organism>
<sequence length="117" mass="12972">MGWSWIFLFLLSGTAGVHSEVQLQQSGPELVKPGASVKISCKASGYTFTDYNMHWVKQSHGKSLEWIGYIYPYNGGTGYNQKFKSKATLTVDNSSSTAYMELSSLTSEDSAVYYCAR</sequence>
<dbReference type="EMBL" id="J00488">
    <property type="protein sequence ID" value="AAA38519.1"/>
    <property type="molecule type" value="Genomic_DNA"/>
</dbReference>
<dbReference type="PIR" id="A02041">
    <property type="entry name" value="HVMS8A"/>
</dbReference>
<dbReference type="EMDB" id="EMD-35735"/>
<dbReference type="EMDB" id="EMD-36407"/>
<dbReference type="EMDB" id="EMD-9604"/>
<dbReference type="SMR" id="P01758"/>
<dbReference type="FunCoup" id="P01758">
    <property type="interactions" value="573"/>
</dbReference>
<dbReference type="GlyGen" id="P01758">
    <property type="glycosylation" value="1 site, 1 O-linked glycan (1 site)"/>
</dbReference>
<dbReference type="jPOST" id="P01758"/>
<dbReference type="PeptideAtlas" id="P01758"/>
<dbReference type="MGI" id="MGI:96486">
    <property type="gene designation" value="Igh-VJ558"/>
</dbReference>
<dbReference type="InParanoid" id="P01758"/>
<dbReference type="PRO" id="PR:P01758"/>
<dbReference type="Proteomes" id="UP000000589">
    <property type="component" value="Unplaced"/>
</dbReference>
<dbReference type="RNAct" id="P01758">
    <property type="molecule type" value="protein"/>
</dbReference>
<dbReference type="GO" id="GO:0005576">
    <property type="term" value="C:extracellular region"/>
    <property type="evidence" value="ECO:0007669"/>
    <property type="project" value="UniProtKB-ARBA"/>
</dbReference>
<dbReference type="GO" id="GO:0019814">
    <property type="term" value="C:immunoglobulin complex"/>
    <property type="evidence" value="ECO:0007669"/>
    <property type="project" value="UniProtKB-KW"/>
</dbReference>
<dbReference type="GO" id="GO:0002250">
    <property type="term" value="P:adaptive immune response"/>
    <property type="evidence" value="ECO:0007669"/>
    <property type="project" value="UniProtKB-KW"/>
</dbReference>
<dbReference type="CDD" id="cd04981">
    <property type="entry name" value="IgV_H"/>
    <property type="match status" value="1"/>
</dbReference>
<dbReference type="FunFam" id="2.60.40.10:FF:001025">
    <property type="entry name" value="Immunoglobulin heavy variable V1-74"/>
    <property type="match status" value="1"/>
</dbReference>
<dbReference type="Gene3D" id="2.60.40.10">
    <property type="entry name" value="Immunoglobulins"/>
    <property type="match status" value="1"/>
</dbReference>
<dbReference type="InterPro" id="IPR007110">
    <property type="entry name" value="Ig-like_dom"/>
</dbReference>
<dbReference type="InterPro" id="IPR036179">
    <property type="entry name" value="Ig-like_dom_sf"/>
</dbReference>
<dbReference type="InterPro" id="IPR013783">
    <property type="entry name" value="Ig-like_fold"/>
</dbReference>
<dbReference type="InterPro" id="IPR013106">
    <property type="entry name" value="Ig_V-set"/>
</dbReference>
<dbReference type="InterPro" id="IPR050199">
    <property type="entry name" value="IgHV"/>
</dbReference>
<dbReference type="PANTHER" id="PTHR23266">
    <property type="entry name" value="IMMUNOGLOBULIN HEAVY CHAIN"/>
    <property type="match status" value="1"/>
</dbReference>
<dbReference type="Pfam" id="PF07686">
    <property type="entry name" value="V-set"/>
    <property type="match status" value="1"/>
</dbReference>
<dbReference type="SMART" id="SM00406">
    <property type="entry name" value="IGv"/>
    <property type="match status" value="1"/>
</dbReference>
<dbReference type="SUPFAM" id="SSF48726">
    <property type="entry name" value="Immunoglobulin"/>
    <property type="match status" value="1"/>
</dbReference>
<dbReference type="PROSITE" id="PS50835">
    <property type="entry name" value="IG_LIKE"/>
    <property type="match status" value="1"/>
</dbReference>